<dbReference type="EC" id="4.2.1.10" evidence="1"/>
<dbReference type="EMBL" id="CP000932">
    <property type="protein sequence ID" value="ACM63593.1"/>
    <property type="molecule type" value="Genomic_DNA"/>
</dbReference>
<dbReference type="RefSeq" id="WP_012660977.1">
    <property type="nucleotide sequence ID" value="NC_012039.1"/>
</dbReference>
<dbReference type="SMR" id="B9KEV8"/>
<dbReference type="STRING" id="306263.Cla_0230"/>
<dbReference type="KEGG" id="cla:CLA_0230"/>
<dbReference type="PATRIC" id="fig|306263.5.peg.228"/>
<dbReference type="eggNOG" id="COG0757">
    <property type="taxonomic scope" value="Bacteria"/>
</dbReference>
<dbReference type="HOGENOM" id="CLU_090968_2_0_7"/>
<dbReference type="UniPathway" id="UPA00053">
    <property type="reaction ID" value="UER00086"/>
</dbReference>
<dbReference type="Proteomes" id="UP000007727">
    <property type="component" value="Chromosome"/>
</dbReference>
<dbReference type="GO" id="GO:0003855">
    <property type="term" value="F:3-dehydroquinate dehydratase activity"/>
    <property type="evidence" value="ECO:0007669"/>
    <property type="project" value="UniProtKB-UniRule"/>
</dbReference>
<dbReference type="GO" id="GO:0008652">
    <property type="term" value="P:amino acid biosynthetic process"/>
    <property type="evidence" value="ECO:0007669"/>
    <property type="project" value="UniProtKB-KW"/>
</dbReference>
<dbReference type="GO" id="GO:0009073">
    <property type="term" value="P:aromatic amino acid family biosynthetic process"/>
    <property type="evidence" value="ECO:0007669"/>
    <property type="project" value="UniProtKB-KW"/>
</dbReference>
<dbReference type="GO" id="GO:0009423">
    <property type="term" value="P:chorismate biosynthetic process"/>
    <property type="evidence" value="ECO:0007669"/>
    <property type="project" value="UniProtKB-UniRule"/>
</dbReference>
<dbReference type="GO" id="GO:0019631">
    <property type="term" value="P:quinate catabolic process"/>
    <property type="evidence" value="ECO:0007669"/>
    <property type="project" value="TreeGrafter"/>
</dbReference>
<dbReference type="CDD" id="cd00466">
    <property type="entry name" value="DHQase_II"/>
    <property type="match status" value="1"/>
</dbReference>
<dbReference type="Gene3D" id="3.40.50.9100">
    <property type="entry name" value="Dehydroquinase, class II"/>
    <property type="match status" value="1"/>
</dbReference>
<dbReference type="HAMAP" id="MF_00169">
    <property type="entry name" value="AroQ"/>
    <property type="match status" value="1"/>
</dbReference>
<dbReference type="InterPro" id="IPR001874">
    <property type="entry name" value="DHquinase_II"/>
</dbReference>
<dbReference type="InterPro" id="IPR018509">
    <property type="entry name" value="DHquinase_II_CS"/>
</dbReference>
<dbReference type="InterPro" id="IPR036441">
    <property type="entry name" value="DHquinase_II_sf"/>
</dbReference>
<dbReference type="NCBIfam" id="TIGR01088">
    <property type="entry name" value="aroQ"/>
    <property type="match status" value="1"/>
</dbReference>
<dbReference type="NCBIfam" id="NF003805">
    <property type="entry name" value="PRK05395.1-2"/>
    <property type="match status" value="1"/>
</dbReference>
<dbReference type="NCBIfam" id="NF003806">
    <property type="entry name" value="PRK05395.1-3"/>
    <property type="match status" value="1"/>
</dbReference>
<dbReference type="NCBIfam" id="NF003807">
    <property type="entry name" value="PRK05395.1-4"/>
    <property type="match status" value="1"/>
</dbReference>
<dbReference type="PANTHER" id="PTHR21272">
    <property type="entry name" value="CATABOLIC 3-DEHYDROQUINASE"/>
    <property type="match status" value="1"/>
</dbReference>
<dbReference type="PANTHER" id="PTHR21272:SF3">
    <property type="entry name" value="CATABOLIC 3-DEHYDROQUINASE"/>
    <property type="match status" value="1"/>
</dbReference>
<dbReference type="Pfam" id="PF01220">
    <property type="entry name" value="DHquinase_II"/>
    <property type="match status" value="1"/>
</dbReference>
<dbReference type="PIRSF" id="PIRSF001399">
    <property type="entry name" value="DHquinase_II"/>
    <property type="match status" value="1"/>
</dbReference>
<dbReference type="SUPFAM" id="SSF52304">
    <property type="entry name" value="Type II 3-dehydroquinate dehydratase"/>
    <property type="match status" value="1"/>
</dbReference>
<dbReference type="PROSITE" id="PS01029">
    <property type="entry name" value="DEHYDROQUINASE_II"/>
    <property type="match status" value="1"/>
</dbReference>
<gene>
    <name evidence="1" type="primary">aroQ</name>
    <name type="ordered locus">Cla_0230</name>
</gene>
<name>AROQ_CAMLR</name>
<protein>
    <recommendedName>
        <fullName evidence="1">3-dehydroquinate dehydratase</fullName>
        <shortName evidence="1">3-dehydroquinase</shortName>
        <ecNumber evidence="1">4.2.1.10</ecNumber>
    </recommendedName>
    <alternativeName>
        <fullName evidence="1">Type II DHQase</fullName>
    </alternativeName>
</protein>
<sequence>MKVMVIQGPNINMLGVRETHIYGNMKMEDIHEQMKQAAKQANVEIEFFQSNFEGELVDKIQECLGSVDGVIINAAAYAHTSIAIRDAITAINMPVIEVHISNTYRREEFRQKSMIAPVCAGSVVGFGPFGYHMALMGLFQIFDQINAYKAAQAKAQQANQ</sequence>
<organism>
    <name type="scientific">Campylobacter lari (strain RM2100 / D67 / ATCC BAA-1060)</name>
    <dbReference type="NCBI Taxonomy" id="306263"/>
    <lineage>
        <taxon>Bacteria</taxon>
        <taxon>Pseudomonadati</taxon>
        <taxon>Campylobacterota</taxon>
        <taxon>Epsilonproteobacteria</taxon>
        <taxon>Campylobacterales</taxon>
        <taxon>Campylobacteraceae</taxon>
        <taxon>Campylobacter</taxon>
    </lineage>
</organism>
<reference key="1">
    <citation type="journal article" date="2008" name="Foodborne Pathog. Dis.">
        <title>The complete genome sequence and analysis of the human pathogen Campylobacter lari.</title>
        <authorList>
            <person name="Miller W.G."/>
            <person name="Wang G."/>
            <person name="Binnewies T.T."/>
            <person name="Parker C.T."/>
        </authorList>
    </citation>
    <scope>NUCLEOTIDE SEQUENCE [LARGE SCALE GENOMIC DNA]</scope>
    <source>
        <strain>RM2100 / D67 / ATCC BAA-1060</strain>
    </source>
</reference>
<accession>B9KEV8</accession>
<comment type="function">
    <text evidence="1">Catalyzes a trans-dehydration via an enolate intermediate.</text>
</comment>
<comment type="catalytic activity">
    <reaction evidence="1">
        <text>3-dehydroquinate = 3-dehydroshikimate + H2O</text>
        <dbReference type="Rhea" id="RHEA:21096"/>
        <dbReference type="ChEBI" id="CHEBI:15377"/>
        <dbReference type="ChEBI" id="CHEBI:16630"/>
        <dbReference type="ChEBI" id="CHEBI:32364"/>
        <dbReference type="EC" id="4.2.1.10"/>
    </reaction>
</comment>
<comment type="pathway">
    <text evidence="1">Metabolic intermediate biosynthesis; chorismate biosynthesis; chorismate from D-erythrose 4-phosphate and phosphoenolpyruvate: step 3/7.</text>
</comment>
<comment type="subunit">
    <text evidence="1">Homododecamer.</text>
</comment>
<comment type="similarity">
    <text evidence="1">Belongs to the type-II 3-dehydroquinase family.</text>
</comment>
<evidence type="ECO:0000255" key="1">
    <source>
        <dbReference type="HAMAP-Rule" id="MF_00169"/>
    </source>
</evidence>
<proteinExistence type="inferred from homology"/>
<keyword id="KW-0028">Amino-acid biosynthesis</keyword>
<keyword id="KW-0057">Aromatic amino acid biosynthesis</keyword>
<keyword id="KW-0456">Lyase</keyword>
<keyword id="KW-1185">Reference proteome</keyword>
<feature type="chain" id="PRO_1000123686" description="3-dehydroquinate dehydratase">
    <location>
        <begin position="1"/>
        <end position="160"/>
    </location>
</feature>
<feature type="active site" description="Proton acceptor" evidence="1">
    <location>
        <position position="22"/>
    </location>
</feature>
<feature type="active site" description="Proton donor" evidence="1">
    <location>
        <position position="99"/>
    </location>
</feature>
<feature type="binding site" evidence="1">
    <location>
        <position position="73"/>
    </location>
    <ligand>
        <name>substrate</name>
    </ligand>
</feature>
<feature type="binding site" evidence="1">
    <location>
        <position position="79"/>
    </location>
    <ligand>
        <name>substrate</name>
    </ligand>
</feature>
<feature type="binding site" evidence="1">
    <location>
        <position position="86"/>
    </location>
    <ligand>
        <name>substrate</name>
    </ligand>
</feature>
<feature type="binding site" evidence="1">
    <location>
        <begin position="100"/>
        <end position="101"/>
    </location>
    <ligand>
        <name>substrate</name>
    </ligand>
</feature>
<feature type="binding site" evidence="1">
    <location>
        <position position="110"/>
    </location>
    <ligand>
        <name>substrate</name>
    </ligand>
</feature>
<feature type="site" description="Transition state stabilizer" evidence="1">
    <location>
        <position position="17"/>
    </location>
</feature>